<dbReference type="EC" id="5.3.3.2" evidence="1"/>
<dbReference type="EMBL" id="CR628337">
    <property type="protein sequence ID" value="CAH16269.1"/>
    <property type="molecule type" value="Genomic_DNA"/>
</dbReference>
<dbReference type="RefSeq" id="WP_011216009.1">
    <property type="nucleotide sequence ID" value="NC_006369.1"/>
</dbReference>
<dbReference type="SMR" id="Q5WUY8"/>
<dbReference type="KEGG" id="lpf:lpl2029"/>
<dbReference type="LegioList" id="lpl2029"/>
<dbReference type="HOGENOM" id="CLU_065515_1_0_6"/>
<dbReference type="Proteomes" id="UP000002517">
    <property type="component" value="Chromosome"/>
</dbReference>
<dbReference type="GO" id="GO:0005737">
    <property type="term" value="C:cytoplasm"/>
    <property type="evidence" value="ECO:0007669"/>
    <property type="project" value="UniProtKB-SubCell"/>
</dbReference>
<dbReference type="GO" id="GO:0010181">
    <property type="term" value="F:FMN binding"/>
    <property type="evidence" value="ECO:0007669"/>
    <property type="project" value="UniProtKB-UniRule"/>
</dbReference>
<dbReference type="GO" id="GO:0004452">
    <property type="term" value="F:isopentenyl-diphosphate delta-isomerase activity"/>
    <property type="evidence" value="ECO:0007669"/>
    <property type="project" value="UniProtKB-UniRule"/>
</dbReference>
<dbReference type="GO" id="GO:0000287">
    <property type="term" value="F:magnesium ion binding"/>
    <property type="evidence" value="ECO:0007669"/>
    <property type="project" value="UniProtKB-UniRule"/>
</dbReference>
<dbReference type="GO" id="GO:0070402">
    <property type="term" value="F:NADPH binding"/>
    <property type="evidence" value="ECO:0007669"/>
    <property type="project" value="UniProtKB-UniRule"/>
</dbReference>
<dbReference type="GO" id="GO:0016491">
    <property type="term" value="F:oxidoreductase activity"/>
    <property type="evidence" value="ECO:0007669"/>
    <property type="project" value="InterPro"/>
</dbReference>
<dbReference type="GO" id="GO:0008299">
    <property type="term" value="P:isoprenoid biosynthetic process"/>
    <property type="evidence" value="ECO:0007669"/>
    <property type="project" value="UniProtKB-UniRule"/>
</dbReference>
<dbReference type="CDD" id="cd02811">
    <property type="entry name" value="IDI-2_FMN"/>
    <property type="match status" value="1"/>
</dbReference>
<dbReference type="Gene3D" id="3.20.20.70">
    <property type="entry name" value="Aldolase class I"/>
    <property type="match status" value="1"/>
</dbReference>
<dbReference type="HAMAP" id="MF_00354">
    <property type="entry name" value="Idi_2"/>
    <property type="match status" value="1"/>
</dbReference>
<dbReference type="InterPro" id="IPR013785">
    <property type="entry name" value="Aldolase_TIM"/>
</dbReference>
<dbReference type="InterPro" id="IPR000262">
    <property type="entry name" value="FMN-dep_DH"/>
</dbReference>
<dbReference type="InterPro" id="IPR011179">
    <property type="entry name" value="IPdP_isomerase"/>
</dbReference>
<dbReference type="NCBIfam" id="TIGR02151">
    <property type="entry name" value="IPP_isom_2"/>
    <property type="match status" value="1"/>
</dbReference>
<dbReference type="PANTHER" id="PTHR43665">
    <property type="entry name" value="ISOPENTENYL-DIPHOSPHATE DELTA-ISOMERASE"/>
    <property type="match status" value="1"/>
</dbReference>
<dbReference type="PANTHER" id="PTHR43665:SF1">
    <property type="entry name" value="ISOPENTENYL-DIPHOSPHATE DELTA-ISOMERASE"/>
    <property type="match status" value="1"/>
</dbReference>
<dbReference type="Pfam" id="PF01070">
    <property type="entry name" value="FMN_dh"/>
    <property type="match status" value="1"/>
</dbReference>
<dbReference type="PIRSF" id="PIRSF003314">
    <property type="entry name" value="IPP_isomerase"/>
    <property type="match status" value="1"/>
</dbReference>
<dbReference type="SUPFAM" id="SSF51395">
    <property type="entry name" value="FMN-linked oxidoreductases"/>
    <property type="match status" value="1"/>
</dbReference>
<protein>
    <recommendedName>
        <fullName evidence="1">Isopentenyl-diphosphate delta-isomerase</fullName>
        <shortName evidence="1">IPP isomerase</shortName>
        <ecNumber evidence="1">5.3.3.2</ecNumber>
    </recommendedName>
    <alternativeName>
        <fullName evidence="1">Isopentenyl diphosphate:dimethylallyl diphosphate isomerase</fullName>
    </alternativeName>
    <alternativeName>
        <fullName evidence="1">Isopentenyl pyrophosphate isomerase</fullName>
    </alternativeName>
    <alternativeName>
        <fullName evidence="1">Type 2 isopentenyl diphosphate isomerase</fullName>
        <shortName evidence="1">IDI-2</shortName>
    </alternativeName>
</protein>
<sequence>MQNEYSQFEQRKRDHIELALMPANQSSELNPFDHFSLVHEALPDLDFKDISIQSIRFNKPVEKPFIISSMTAGHSNAIEINYRLMEACSKTKWAMGVGSQRRELTDKQAAFEWEPLRRDFPMVSLFSNLGIAQLIDTPISAIQRLIDTLHAEALIIHCNPLQECIQPEGTTNFHGCWAALEALVKKINSPVIVKETGCGFSKNTLLRLNNIGVAAVDVSGVGGTHWGRIEGHRADKDPIRHRTADTFRNWGIDTLQSTHNAISLNPSFEIWGSGGVRNGLDAAKLFALGATTVGFAKPMLEAALDSTDQVLTQMNTIEYELKTAMFCTGSLVLDDLKEKACP</sequence>
<reference key="1">
    <citation type="journal article" date="2004" name="Nat. Genet.">
        <title>Evidence in the Legionella pneumophila genome for exploitation of host cell functions and high genome plasticity.</title>
        <authorList>
            <person name="Cazalet C."/>
            <person name="Rusniok C."/>
            <person name="Brueggemann H."/>
            <person name="Zidane N."/>
            <person name="Magnier A."/>
            <person name="Ma L."/>
            <person name="Tichit M."/>
            <person name="Jarraud S."/>
            <person name="Bouchier C."/>
            <person name="Vandenesch F."/>
            <person name="Kunst F."/>
            <person name="Etienne J."/>
            <person name="Glaser P."/>
            <person name="Buchrieser C."/>
        </authorList>
    </citation>
    <scope>NUCLEOTIDE SEQUENCE [LARGE SCALE GENOMIC DNA]</scope>
    <source>
        <strain>Lens</strain>
    </source>
</reference>
<name>IDI2_LEGPL</name>
<feature type="chain" id="PRO_1000048444" description="Isopentenyl-diphosphate delta-isomerase">
    <location>
        <begin position="1"/>
        <end position="342"/>
    </location>
</feature>
<feature type="binding site" evidence="1">
    <location>
        <begin position="11"/>
        <end position="12"/>
    </location>
    <ligand>
        <name>substrate</name>
    </ligand>
</feature>
<feature type="binding site" evidence="1">
    <location>
        <position position="68"/>
    </location>
    <ligand>
        <name>FMN</name>
        <dbReference type="ChEBI" id="CHEBI:58210"/>
    </ligand>
</feature>
<feature type="binding site" evidence="1">
    <location>
        <begin position="69"/>
        <end position="71"/>
    </location>
    <ligand>
        <name>FMN</name>
        <dbReference type="ChEBI" id="CHEBI:58210"/>
    </ligand>
</feature>
<feature type="binding site" evidence="1">
    <location>
        <begin position="99"/>
        <end position="101"/>
    </location>
    <ligand>
        <name>substrate</name>
    </ligand>
</feature>
<feature type="binding site" evidence="1">
    <location>
        <position position="99"/>
    </location>
    <ligand>
        <name>FMN</name>
        <dbReference type="ChEBI" id="CHEBI:58210"/>
    </ligand>
</feature>
<feature type="binding site" evidence="1">
    <location>
        <position position="128"/>
    </location>
    <ligand>
        <name>FMN</name>
        <dbReference type="ChEBI" id="CHEBI:58210"/>
    </ligand>
</feature>
<feature type="binding site" evidence="1">
    <location>
        <position position="162"/>
    </location>
    <ligand>
        <name>substrate</name>
    </ligand>
</feature>
<feature type="binding site" evidence="1">
    <location>
        <position position="163"/>
    </location>
    <ligand>
        <name>Mg(2+)</name>
        <dbReference type="ChEBI" id="CHEBI:18420"/>
    </ligand>
</feature>
<feature type="binding site" evidence="1">
    <location>
        <position position="194"/>
    </location>
    <ligand>
        <name>FMN</name>
        <dbReference type="ChEBI" id="CHEBI:58210"/>
    </ligand>
</feature>
<feature type="binding site" evidence="1">
    <location>
        <position position="219"/>
    </location>
    <ligand>
        <name>FMN</name>
        <dbReference type="ChEBI" id="CHEBI:58210"/>
    </ligand>
</feature>
<feature type="binding site" evidence="1">
    <location>
        <position position="224"/>
    </location>
    <ligand>
        <name>FMN</name>
        <dbReference type="ChEBI" id="CHEBI:58210"/>
    </ligand>
</feature>
<feature type="binding site" evidence="1">
    <location>
        <begin position="275"/>
        <end position="277"/>
    </location>
    <ligand>
        <name>FMN</name>
        <dbReference type="ChEBI" id="CHEBI:58210"/>
    </ligand>
</feature>
<feature type="binding site" evidence="1">
    <location>
        <begin position="296"/>
        <end position="297"/>
    </location>
    <ligand>
        <name>FMN</name>
        <dbReference type="ChEBI" id="CHEBI:58210"/>
    </ligand>
</feature>
<evidence type="ECO:0000255" key="1">
    <source>
        <dbReference type="HAMAP-Rule" id="MF_00354"/>
    </source>
</evidence>
<gene>
    <name evidence="1" type="primary">fni</name>
    <name type="ordered locus">lpl2029</name>
</gene>
<comment type="function">
    <text evidence="1">Involved in the biosynthesis of isoprenoids. Catalyzes the 1,3-allylic rearrangement of the homoallylic substrate isopentenyl (IPP) to its allylic isomer, dimethylallyl diphosphate (DMAPP).</text>
</comment>
<comment type="catalytic activity">
    <reaction evidence="1">
        <text>isopentenyl diphosphate = dimethylallyl diphosphate</text>
        <dbReference type="Rhea" id="RHEA:23284"/>
        <dbReference type="ChEBI" id="CHEBI:57623"/>
        <dbReference type="ChEBI" id="CHEBI:128769"/>
        <dbReference type="EC" id="5.3.3.2"/>
    </reaction>
</comment>
<comment type="cofactor">
    <cofactor evidence="1">
        <name>FMN</name>
        <dbReference type="ChEBI" id="CHEBI:58210"/>
    </cofactor>
</comment>
<comment type="cofactor">
    <cofactor evidence="1">
        <name>NADPH</name>
        <dbReference type="ChEBI" id="CHEBI:57783"/>
    </cofactor>
</comment>
<comment type="cofactor">
    <cofactor evidence="1">
        <name>Mg(2+)</name>
        <dbReference type="ChEBI" id="CHEBI:18420"/>
    </cofactor>
</comment>
<comment type="subunit">
    <text evidence="1">Homooctamer. Dimer of tetramers.</text>
</comment>
<comment type="subcellular location">
    <subcellularLocation>
        <location evidence="1">Cytoplasm</location>
    </subcellularLocation>
</comment>
<comment type="similarity">
    <text evidence="1">Belongs to the IPP isomerase type 2 family.</text>
</comment>
<accession>Q5WUY8</accession>
<proteinExistence type="inferred from homology"/>
<keyword id="KW-0963">Cytoplasm</keyword>
<keyword id="KW-0285">Flavoprotein</keyword>
<keyword id="KW-0288">FMN</keyword>
<keyword id="KW-0413">Isomerase</keyword>
<keyword id="KW-0414">Isoprene biosynthesis</keyword>
<keyword id="KW-0460">Magnesium</keyword>
<keyword id="KW-0479">Metal-binding</keyword>
<keyword id="KW-0521">NADP</keyword>
<organism>
    <name type="scientific">Legionella pneumophila (strain Lens)</name>
    <dbReference type="NCBI Taxonomy" id="297245"/>
    <lineage>
        <taxon>Bacteria</taxon>
        <taxon>Pseudomonadati</taxon>
        <taxon>Pseudomonadota</taxon>
        <taxon>Gammaproteobacteria</taxon>
        <taxon>Legionellales</taxon>
        <taxon>Legionellaceae</taxon>
        <taxon>Legionella</taxon>
    </lineage>
</organism>